<comment type="function">
    <text evidence="1">Increases the formation of ribosomal termination complexes and stimulates activities of RF-1 and RF-2. It binds guanine nucleotides and has strong preference for UGA stop codons. It may interact directly with the ribosome. The stimulation of RF-1 and RF-2 is significantly reduced by GTP and GDP, but not by GMP.</text>
</comment>
<comment type="subcellular location">
    <subcellularLocation>
        <location evidence="1">Cytoplasm</location>
    </subcellularLocation>
</comment>
<comment type="similarity">
    <text evidence="1">Belongs to the TRAFAC class translation factor GTPase superfamily. Classic translation factor GTPase family. PrfC subfamily.</text>
</comment>
<organism>
    <name type="scientific">Francisella tularensis subsp. tularensis (strain FSC 198)</name>
    <dbReference type="NCBI Taxonomy" id="393115"/>
    <lineage>
        <taxon>Bacteria</taxon>
        <taxon>Pseudomonadati</taxon>
        <taxon>Pseudomonadota</taxon>
        <taxon>Gammaproteobacteria</taxon>
        <taxon>Thiotrichales</taxon>
        <taxon>Francisellaceae</taxon>
        <taxon>Francisella</taxon>
    </lineage>
</organism>
<sequence>MSEYLQQIAKRRTFAIISHPDAGKTTITEKMLLFGNAIKTAGTVKAKKSGIHATSDWMEMEKQRGISITTSVMQFPYNGRIINLLDTPGHEDFSEDTYRTLTAVDSALMVVDAVKGVEDRTIKLMNVCRLRDTPIVTFMNKFDRDTRDPLELLDEVENILKIKCAPINWPIGMGKYFKGVYDLYNDEVTLFETGHGHEIYPYKKIKGLANAKDAIGIDLYEDLEMEIDLVRGASHEFDEQEFLEGNLTPVYFGTALSNFGVKEMMDGFTRYAPAPQHREADQRVVAADEQKLTGFVFKIQANMDEKHRNRIAFFRICSGKYEKGMKIFHERTGKQMQISKALTFMAGEREQVEEGYAGDIIGLHNHGSIQIGDSFTQGEKLKFKGIPNFAPEIFKRVKLNDPLKMKALQKGLVQLSEEGATQVFKPFISNDLVLGAVGVLQFDVVAQRLASEYNVKCSYEGVNVTLARWIFCNDEKKLNDFKKKYEVNLAYDGAGYLTYLAPTGVNLQLAQEKNPDIIFSATREH</sequence>
<proteinExistence type="inferred from homology"/>
<evidence type="ECO:0000255" key="1">
    <source>
        <dbReference type="HAMAP-Rule" id="MF_00072"/>
    </source>
</evidence>
<keyword id="KW-0963">Cytoplasm</keyword>
<keyword id="KW-0342">GTP-binding</keyword>
<keyword id="KW-0547">Nucleotide-binding</keyword>
<keyword id="KW-0648">Protein biosynthesis</keyword>
<dbReference type="EMBL" id="AM286280">
    <property type="protein sequence ID" value="CAL08134.1"/>
    <property type="molecule type" value="Genomic_DNA"/>
</dbReference>
<dbReference type="RefSeq" id="WP_003019866.1">
    <property type="nucleotide sequence ID" value="NC_008245.1"/>
</dbReference>
<dbReference type="SMR" id="Q14JV7"/>
<dbReference type="KEGG" id="ftf:FTF0118"/>
<dbReference type="HOGENOM" id="CLU_002794_2_1_6"/>
<dbReference type="GO" id="GO:0005829">
    <property type="term" value="C:cytosol"/>
    <property type="evidence" value="ECO:0007669"/>
    <property type="project" value="TreeGrafter"/>
</dbReference>
<dbReference type="GO" id="GO:0005525">
    <property type="term" value="F:GTP binding"/>
    <property type="evidence" value="ECO:0007669"/>
    <property type="project" value="UniProtKB-UniRule"/>
</dbReference>
<dbReference type="GO" id="GO:0003924">
    <property type="term" value="F:GTPase activity"/>
    <property type="evidence" value="ECO:0007669"/>
    <property type="project" value="InterPro"/>
</dbReference>
<dbReference type="GO" id="GO:0097216">
    <property type="term" value="F:guanosine tetraphosphate binding"/>
    <property type="evidence" value="ECO:0007669"/>
    <property type="project" value="UniProtKB-ARBA"/>
</dbReference>
<dbReference type="GO" id="GO:0016150">
    <property type="term" value="F:translation release factor activity, codon nonspecific"/>
    <property type="evidence" value="ECO:0007669"/>
    <property type="project" value="TreeGrafter"/>
</dbReference>
<dbReference type="GO" id="GO:0016149">
    <property type="term" value="F:translation release factor activity, codon specific"/>
    <property type="evidence" value="ECO:0007669"/>
    <property type="project" value="UniProtKB-UniRule"/>
</dbReference>
<dbReference type="GO" id="GO:0006449">
    <property type="term" value="P:regulation of translational termination"/>
    <property type="evidence" value="ECO:0007669"/>
    <property type="project" value="UniProtKB-UniRule"/>
</dbReference>
<dbReference type="CDD" id="cd04169">
    <property type="entry name" value="RF3"/>
    <property type="match status" value="1"/>
</dbReference>
<dbReference type="CDD" id="cd16259">
    <property type="entry name" value="RF3_III"/>
    <property type="match status" value="1"/>
</dbReference>
<dbReference type="FunFam" id="2.40.30.10:FF:000040">
    <property type="entry name" value="Peptide chain release factor 3"/>
    <property type="match status" value="1"/>
</dbReference>
<dbReference type="FunFam" id="3.30.70.3280:FF:000001">
    <property type="entry name" value="Peptide chain release factor 3"/>
    <property type="match status" value="1"/>
</dbReference>
<dbReference type="FunFam" id="3.40.50.300:FF:000542">
    <property type="entry name" value="Peptide chain release factor 3"/>
    <property type="match status" value="1"/>
</dbReference>
<dbReference type="Gene3D" id="3.40.50.300">
    <property type="entry name" value="P-loop containing nucleotide triphosphate hydrolases"/>
    <property type="match status" value="1"/>
</dbReference>
<dbReference type="Gene3D" id="3.30.70.3280">
    <property type="entry name" value="Peptide chain release factor 3, domain III"/>
    <property type="match status" value="1"/>
</dbReference>
<dbReference type="Gene3D" id="2.40.30.10">
    <property type="entry name" value="Translation factors"/>
    <property type="match status" value="1"/>
</dbReference>
<dbReference type="HAMAP" id="MF_00072">
    <property type="entry name" value="Rel_fac_3"/>
    <property type="match status" value="1"/>
</dbReference>
<dbReference type="InterPro" id="IPR053905">
    <property type="entry name" value="EF-G-like_DII"/>
</dbReference>
<dbReference type="InterPro" id="IPR035647">
    <property type="entry name" value="EFG_III/V"/>
</dbReference>
<dbReference type="InterPro" id="IPR031157">
    <property type="entry name" value="G_TR_CS"/>
</dbReference>
<dbReference type="InterPro" id="IPR027417">
    <property type="entry name" value="P-loop_NTPase"/>
</dbReference>
<dbReference type="InterPro" id="IPR004548">
    <property type="entry name" value="PrfC"/>
</dbReference>
<dbReference type="InterPro" id="IPR032090">
    <property type="entry name" value="RF3_C"/>
</dbReference>
<dbReference type="InterPro" id="IPR038467">
    <property type="entry name" value="RF3_dom_3_sf"/>
</dbReference>
<dbReference type="InterPro" id="IPR041732">
    <property type="entry name" value="RF3_GTP-bd"/>
</dbReference>
<dbReference type="InterPro" id="IPR005225">
    <property type="entry name" value="Small_GTP-bd"/>
</dbReference>
<dbReference type="InterPro" id="IPR000795">
    <property type="entry name" value="T_Tr_GTP-bd_dom"/>
</dbReference>
<dbReference type="InterPro" id="IPR009000">
    <property type="entry name" value="Transl_B-barrel_sf"/>
</dbReference>
<dbReference type="NCBIfam" id="TIGR00503">
    <property type="entry name" value="prfC"/>
    <property type="match status" value="1"/>
</dbReference>
<dbReference type="NCBIfam" id="NF001964">
    <property type="entry name" value="PRK00741.1"/>
    <property type="match status" value="1"/>
</dbReference>
<dbReference type="NCBIfam" id="TIGR00231">
    <property type="entry name" value="small_GTP"/>
    <property type="match status" value="1"/>
</dbReference>
<dbReference type="PANTHER" id="PTHR43556">
    <property type="entry name" value="PEPTIDE CHAIN RELEASE FACTOR RF3"/>
    <property type="match status" value="1"/>
</dbReference>
<dbReference type="PANTHER" id="PTHR43556:SF2">
    <property type="entry name" value="PEPTIDE CHAIN RELEASE FACTOR RF3"/>
    <property type="match status" value="1"/>
</dbReference>
<dbReference type="Pfam" id="PF22042">
    <property type="entry name" value="EF-G_D2"/>
    <property type="match status" value="1"/>
</dbReference>
<dbReference type="Pfam" id="PF00009">
    <property type="entry name" value="GTP_EFTU"/>
    <property type="match status" value="1"/>
</dbReference>
<dbReference type="Pfam" id="PF16658">
    <property type="entry name" value="RF3_C"/>
    <property type="match status" value="1"/>
</dbReference>
<dbReference type="PRINTS" id="PR00315">
    <property type="entry name" value="ELONGATNFCT"/>
</dbReference>
<dbReference type="SUPFAM" id="SSF54980">
    <property type="entry name" value="EF-G C-terminal domain-like"/>
    <property type="match status" value="1"/>
</dbReference>
<dbReference type="SUPFAM" id="SSF52540">
    <property type="entry name" value="P-loop containing nucleoside triphosphate hydrolases"/>
    <property type="match status" value="1"/>
</dbReference>
<dbReference type="SUPFAM" id="SSF50447">
    <property type="entry name" value="Translation proteins"/>
    <property type="match status" value="1"/>
</dbReference>
<dbReference type="PROSITE" id="PS00301">
    <property type="entry name" value="G_TR_1"/>
    <property type="match status" value="1"/>
</dbReference>
<dbReference type="PROSITE" id="PS51722">
    <property type="entry name" value="G_TR_2"/>
    <property type="match status" value="1"/>
</dbReference>
<accession>Q14JV7</accession>
<protein>
    <recommendedName>
        <fullName evidence="1">Peptide chain release factor 3</fullName>
        <shortName evidence="1">RF-3</shortName>
    </recommendedName>
</protein>
<reference key="1">
    <citation type="journal article" date="2007" name="PLoS ONE">
        <title>Genome sequencing shows that European isolates of Francisella tularensis subspecies tularensis are almost identical to US laboratory strain Schu S4.</title>
        <authorList>
            <person name="Chaudhuri R.R."/>
            <person name="Ren C.-P."/>
            <person name="Desmond L."/>
            <person name="Vincent G.A."/>
            <person name="Silman N.J."/>
            <person name="Brehm J.K."/>
            <person name="Elmore M.J."/>
            <person name="Hudson M.J."/>
            <person name="Forsman M."/>
            <person name="Isherwood K.E."/>
            <person name="Gurycova D."/>
            <person name="Minton N.P."/>
            <person name="Titball R.W."/>
            <person name="Pallen M.J."/>
            <person name="Vipond R."/>
        </authorList>
    </citation>
    <scope>NUCLEOTIDE SEQUENCE [LARGE SCALE GENOMIC DNA]</scope>
    <source>
        <strain>FSC 198</strain>
    </source>
</reference>
<feature type="chain" id="PRO_1000023645" description="Peptide chain release factor 3">
    <location>
        <begin position="1"/>
        <end position="525"/>
    </location>
</feature>
<feature type="domain" description="tr-type G">
    <location>
        <begin position="9"/>
        <end position="276"/>
    </location>
</feature>
<feature type="binding site" evidence="1">
    <location>
        <begin position="18"/>
        <end position="25"/>
    </location>
    <ligand>
        <name>GTP</name>
        <dbReference type="ChEBI" id="CHEBI:37565"/>
    </ligand>
</feature>
<feature type="binding site" evidence="1">
    <location>
        <begin position="86"/>
        <end position="90"/>
    </location>
    <ligand>
        <name>GTP</name>
        <dbReference type="ChEBI" id="CHEBI:37565"/>
    </ligand>
</feature>
<feature type="binding site" evidence="1">
    <location>
        <begin position="140"/>
        <end position="143"/>
    </location>
    <ligand>
        <name>GTP</name>
        <dbReference type="ChEBI" id="CHEBI:37565"/>
    </ligand>
</feature>
<gene>
    <name evidence="1" type="primary">prfC</name>
    <name type="ordered locus">FTF0118</name>
</gene>
<name>RF3_FRAT1</name>